<accession>A5WCK5</accession>
<gene>
    <name evidence="1" type="primary">rplF</name>
    <name type="ordered locus">PsycPRwf_0441</name>
</gene>
<feature type="chain" id="PRO_1000073407" description="Large ribosomal subunit protein uL6">
    <location>
        <begin position="1"/>
        <end position="177"/>
    </location>
</feature>
<feature type="region of interest" description="Disordered" evidence="2">
    <location>
        <begin position="151"/>
        <end position="177"/>
    </location>
</feature>
<feature type="compositionally biased region" description="Basic and acidic residues" evidence="2">
    <location>
        <begin position="155"/>
        <end position="177"/>
    </location>
</feature>
<sequence length="177" mass="19364">MSRVAKAPVALPNGVSVTLNGQQVEVKGSKGTMSLHLHDLVELKQEDSQLILSPVSDSKEAWMHTGTMRSTLNNFVIGVSEGFERKLQLIGVGYRAQVAGNKITLNVGYSHPVEYILPEGVTAETPSQTEIILKSNDKQALGQAAAKIRGYRPPEPYKGKGIRYSDEHVVRKEAKKK</sequence>
<name>RL6_PSYWF</name>
<organism>
    <name type="scientific">Psychrobacter sp. (strain PRwf-1)</name>
    <dbReference type="NCBI Taxonomy" id="349106"/>
    <lineage>
        <taxon>Bacteria</taxon>
        <taxon>Pseudomonadati</taxon>
        <taxon>Pseudomonadota</taxon>
        <taxon>Gammaproteobacteria</taxon>
        <taxon>Moraxellales</taxon>
        <taxon>Moraxellaceae</taxon>
        <taxon>Psychrobacter</taxon>
    </lineage>
</organism>
<evidence type="ECO:0000255" key="1">
    <source>
        <dbReference type="HAMAP-Rule" id="MF_01365"/>
    </source>
</evidence>
<evidence type="ECO:0000256" key="2">
    <source>
        <dbReference type="SAM" id="MobiDB-lite"/>
    </source>
</evidence>
<evidence type="ECO:0000305" key="3"/>
<keyword id="KW-0687">Ribonucleoprotein</keyword>
<keyword id="KW-0689">Ribosomal protein</keyword>
<keyword id="KW-0694">RNA-binding</keyword>
<keyword id="KW-0699">rRNA-binding</keyword>
<comment type="function">
    <text evidence="1">This protein binds to the 23S rRNA, and is important in its secondary structure. It is located near the subunit interface in the base of the L7/L12 stalk, and near the tRNA binding site of the peptidyltransferase center.</text>
</comment>
<comment type="subunit">
    <text evidence="1">Part of the 50S ribosomal subunit.</text>
</comment>
<comment type="similarity">
    <text evidence="1">Belongs to the universal ribosomal protein uL6 family.</text>
</comment>
<dbReference type="EMBL" id="CP000713">
    <property type="protein sequence ID" value="ABQ93396.1"/>
    <property type="molecule type" value="Genomic_DNA"/>
</dbReference>
<dbReference type="SMR" id="A5WCK5"/>
<dbReference type="STRING" id="349106.PsycPRwf_0441"/>
<dbReference type="KEGG" id="prw:PsycPRwf_0441"/>
<dbReference type="eggNOG" id="COG0097">
    <property type="taxonomic scope" value="Bacteria"/>
</dbReference>
<dbReference type="HOGENOM" id="CLU_065464_1_2_6"/>
<dbReference type="GO" id="GO:0022625">
    <property type="term" value="C:cytosolic large ribosomal subunit"/>
    <property type="evidence" value="ECO:0007669"/>
    <property type="project" value="TreeGrafter"/>
</dbReference>
<dbReference type="GO" id="GO:0019843">
    <property type="term" value="F:rRNA binding"/>
    <property type="evidence" value="ECO:0007669"/>
    <property type="project" value="UniProtKB-UniRule"/>
</dbReference>
<dbReference type="GO" id="GO:0003735">
    <property type="term" value="F:structural constituent of ribosome"/>
    <property type="evidence" value="ECO:0007669"/>
    <property type="project" value="InterPro"/>
</dbReference>
<dbReference type="GO" id="GO:0002181">
    <property type="term" value="P:cytoplasmic translation"/>
    <property type="evidence" value="ECO:0007669"/>
    <property type="project" value="TreeGrafter"/>
</dbReference>
<dbReference type="FunFam" id="3.90.930.12:FF:000001">
    <property type="entry name" value="50S ribosomal protein L6"/>
    <property type="match status" value="1"/>
</dbReference>
<dbReference type="FunFam" id="3.90.930.12:FF:000002">
    <property type="entry name" value="50S ribosomal protein L6"/>
    <property type="match status" value="1"/>
</dbReference>
<dbReference type="Gene3D" id="3.90.930.12">
    <property type="entry name" value="Ribosomal protein L6, alpha-beta domain"/>
    <property type="match status" value="2"/>
</dbReference>
<dbReference type="HAMAP" id="MF_01365_B">
    <property type="entry name" value="Ribosomal_uL6_B"/>
    <property type="match status" value="1"/>
</dbReference>
<dbReference type="InterPro" id="IPR000702">
    <property type="entry name" value="Ribosomal_uL6-like"/>
</dbReference>
<dbReference type="InterPro" id="IPR036789">
    <property type="entry name" value="Ribosomal_uL6-like_a/b-dom_sf"/>
</dbReference>
<dbReference type="InterPro" id="IPR020040">
    <property type="entry name" value="Ribosomal_uL6_a/b-dom"/>
</dbReference>
<dbReference type="InterPro" id="IPR019906">
    <property type="entry name" value="Ribosomal_uL6_bac-type"/>
</dbReference>
<dbReference type="InterPro" id="IPR002358">
    <property type="entry name" value="Ribosomal_uL6_CS"/>
</dbReference>
<dbReference type="NCBIfam" id="TIGR03654">
    <property type="entry name" value="L6_bact"/>
    <property type="match status" value="1"/>
</dbReference>
<dbReference type="PANTHER" id="PTHR11655">
    <property type="entry name" value="60S/50S RIBOSOMAL PROTEIN L6/L9"/>
    <property type="match status" value="1"/>
</dbReference>
<dbReference type="PANTHER" id="PTHR11655:SF14">
    <property type="entry name" value="LARGE RIBOSOMAL SUBUNIT PROTEIN UL6M"/>
    <property type="match status" value="1"/>
</dbReference>
<dbReference type="Pfam" id="PF00347">
    <property type="entry name" value="Ribosomal_L6"/>
    <property type="match status" value="2"/>
</dbReference>
<dbReference type="PIRSF" id="PIRSF002162">
    <property type="entry name" value="Ribosomal_L6"/>
    <property type="match status" value="1"/>
</dbReference>
<dbReference type="PRINTS" id="PR00059">
    <property type="entry name" value="RIBOSOMALL6"/>
</dbReference>
<dbReference type="SUPFAM" id="SSF56053">
    <property type="entry name" value="Ribosomal protein L6"/>
    <property type="match status" value="2"/>
</dbReference>
<dbReference type="PROSITE" id="PS00525">
    <property type="entry name" value="RIBOSOMAL_L6_1"/>
    <property type="match status" value="1"/>
</dbReference>
<proteinExistence type="inferred from homology"/>
<protein>
    <recommendedName>
        <fullName evidence="1">Large ribosomal subunit protein uL6</fullName>
    </recommendedName>
    <alternativeName>
        <fullName evidence="3">50S ribosomal protein L6</fullName>
    </alternativeName>
</protein>
<reference key="1">
    <citation type="submission" date="2007-05" db="EMBL/GenBank/DDBJ databases">
        <title>Complete sequence of chromosome of Psychrobacter sp. PRwf-1.</title>
        <authorList>
            <consortium name="US DOE Joint Genome Institute"/>
            <person name="Copeland A."/>
            <person name="Lucas S."/>
            <person name="Lapidus A."/>
            <person name="Barry K."/>
            <person name="Detter J.C."/>
            <person name="Glavina del Rio T."/>
            <person name="Hammon N."/>
            <person name="Israni S."/>
            <person name="Dalin E."/>
            <person name="Tice H."/>
            <person name="Pitluck S."/>
            <person name="Chain P."/>
            <person name="Malfatti S."/>
            <person name="Shin M."/>
            <person name="Vergez L."/>
            <person name="Schmutz J."/>
            <person name="Larimer F."/>
            <person name="Land M."/>
            <person name="Hauser L."/>
            <person name="Kyrpides N."/>
            <person name="Kim E."/>
            <person name="Tiedje J."/>
            <person name="Richardson P."/>
        </authorList>
    </citation>
    <scope>NUCLEOTIDE SEQUENCE [LARGE SCALE GENOMIC DNA]</scope>
    <source>
        <strain>PRwf-1</strain>
    </source>
</reference>